<sequence length="559" mass="64229">MRKFAYCKVVLATSLVWVLLDMFLLLYFSECNKCEEKKERGLPAGDVLELVQKPHEGPGEMGKPVVIPKEDQEKMKEMFKINQFNLMASEMIAFNRSLPDVRLEGCKTKVYPDSLPTTSVVIVFHNEAWSTLLRTVHSVINRSPRHMIEEIVLVDDASERDFLKRPLESYVKKLKVPVHVIRMEQRSGLIRARLKGAAVSKGQVITFLDAHCECTVGWLEPLLARIKHDRRTVVCPIIDVISDDTFEYMAGSDMTYGGFNWKLNFRWYPVPQREMDRRKGDRTLPVRTPTMAGGLFSIDRDYFQEIGTYDAGMDIWGGENLEISFRIWQCGGTLEIVTCSHVGHVFRKATPYTFPGGTGQIINKNNRRLAEVWMDEFKNFFYIISPGVTKVDYGDISSRVGLRHKLQCKPFSWYLENIYPDSQIPRHYFSLGEIRNVETNQCLDNMARKENEKVGIFNCHGMGGNQVFSYTANKEIRTDDLCLDVSKLNGPVTMLKCHHLKGNQLWEYDPVKLTLQHVNSNQCLDKATEEDSQVPSIRDCTGSRSQQWLLRNVTLPEIF</sequence>
<reference key="1">
    <citation type="journal article" date="1995" name="Glycoconj. J.">
        <title>Cloning and sequence homology of a rat UDP-GalNAc:polypeptide N-acetylgalactosaminyltransferase.</title>
        <authorList>
            <person name="Hagen F."/>
            <person name="Gregorie C.A."/>
            <person name="Tabak L.A."/>
        </authorList>
    </citation>
    <scope>NUCLEOTIDE SEQUENCE [MRNA]</scope>
    <source>
        <strain>Sprague-Dawley</strain>
        <tissue>Sublingual gland</tissue>
    </source>
</reference>
<reference key="2">
    <citation type="journal article" date="2002" name="Eur. J. Biochem.">
        <title>Identification of two cysteine residues involved in the binding of UDP-GalNAc to UDP-GalNAc:polypeptide N-acetylgalactosaminyltransferase 1 (GalNAc-T1).</title>
        <authorList>
            <person name="Tenno M."/>
            <person name="Toba S."/>
            <person name="Kezdy F.J."/>
            <person name="Elhammer A.P."/>
            <person name="Kurosaka A."/>
        </authorList>
    </citation>
    <scope>FUNCTION</scope>
    <scope>CATALYTIC ACTIVITY</scope>
    <scope>BIOPHYSICOCHEMICAL PROPERTIES</scope>
    <scope>PATHWAY</scope>
    <scope>MUTAGENESIS OF CYS-106; CYS-212; CYS-214; CYS-235; CYS-330; CYS-339 AND CYS-408</scope>
</reference>
<reference key="3">
    <citation type="journal article" date="2002" name="J. Biol. Chem.">
        <title>The lectin domain of UDP-GalNAc:polypeptide N-acetylgalactosaminyltransferase 1 is involved in O-glycosylation of a polypeptide with multiple acceptor sites.</title>
        <authorList>
            <person name="Tenno M."/>
            <person name="Saeki A."/>
            <person name="Kezdy F.J."/>
            <person name="Elhammer A.P."/>
            <person name="Kurosaka A."/>
        </authorList>
    </citation>
    <scope>FUNCTION</scope>
    <scope>CATALYTIC ACTIVITY</scope>
    <scope>BIOPHYSICOCHEMICAL PROPERTIES</scope>
    <scope>PATHWAY</scope>
    <scope>MUTAGENESIS OF CYS-442; ASP-444; GLY-455; PHE-457; CYS-459; ASN-465; GLN-466; PHE-468; CYS-482; ASP-484; CYS-497; CYS-523; ASP-525 AND CYS-540</scope>
</reference>
<reference key="4">
    <citation type="journal article" date="2002" name="Biochem. Biophys. Res. Commun.">
        <title>Function of the lectin domain of polypeptide N-acetylgalactosaminyltransferase 1.</title>
        <authorList>
            <person name="Tenno M."/>
            <person name="Kezdy F.J."/>
            <person name="Elhammer A.P."/>
            <person name="Kurosaka A."/>
        </authorList>
    </citation>
    <scope>FUNCTION</scope>
    <scope>CATALYTIC ACTIVITY</scope>
    <scope>BIOPHYSICOCHEMICAL PROPERTIES</scope>
    <scope>PATHWAY</scope>
    <scope>MUTAGENESIS OF ASP-444; ASP-484 AND ASP-525</scope>
</reference>
<feature type="chain" id="PRO_0000223390" description="Polypeptide N-acetylgalactosaminyltransferase 1">
    <location>
        <begin position="1"/>
        <end position="559"/>
    </location>
</feature>
<feature type="chain" id="PRO_0000012263" description="Polypeptide N-acetylgalactosaminyltransferase 1 soluble form">
    <location>
        <begin position="41"/>
        <end position="559"/>
    </location>
</feature>
<feature type="topological domain" description="Cytoplasmic" evidence="4">
    <location>
        <begin position="1"/>
        <end position="8"/>
    </location>
</feature>
<feature type="transmembrane region" description="Helical; Signal-anchor for type II membrane protein" evidence="4">
    <location>
        <begin position="9"/>
        <end position="28"/>
    </location>
</feature>
<feature type="topological domain" description="Lumenal" evidence="4">
    <location>
        <begin position="29"/>
        <end position="559"/>
    </location>
</feature>
<feature type="domain" description="Ricin B-type lectin" evidence="5">
    <location>
        <begin position="429"/>
        <end position="551"/>
    </location>
</feature>
<feature type="region of interest" description="Catalytic subdomain A">
    <location>
        <begin position="115"/>
        <end position="225"/>
    </location>
</feature>
<feature type="region of interest" description="Catalytic subdomain B">
    <location>
        <begin position="285"/>
        <end position="347"/>
    </location>
</feature>
<feature type="binding site" evidence="1">
    <location>
        <position position="156"/>
    </location>
    <ligand>
        <name>substrate</name>
    </ligand>
</feature>
<feature type="binding site" evidence="1">
    <location>
        <position position="186"/>
    </location>
    <ligand>
        <name>substrate</name>
    </ligand>
</feature>
<feature type="binding site" evidence="1">
    <location>
        <position position="209"/>
    </location>
    <ligand>
        <name>Mn(2+)</name>
        <dbReference type="ChEBI" id="CHEBI:29035"/>
    </ligand>
</feature>
<feature type="binding site" evidence="1">
    <location>
        <position position="211"/>
    </location>
    <ligand>
        <name>Mn(2+)</name>
        <dbReference type="ChEBI" id="CHEBI:29035"/>
    </ligand>
</feature>
<feature type="binding site" evidence="1">
    <location>
        <position position="316"/>
    </location>
    <ligand>
        <name>substrate</name>
    </ligand>
</feature>
<feature type="binding site" evidence="1">
    <location>
        <position position="344"/>
    </location>
    <ligand>
        <name>Mn(2+)</name>
        <dbReference type="ChEBI" id="CHEBI:29035"/>
    </ligand>
</feature>
<feature type="binding site" evidence="1">
    <location>
        <position position="347"/>
    </location>
    <ligand>
        <name>substrate</name>
    </ligand>
</feature>
<feature type="binding site" evidence="1">
    <location>
        <position position="352"/>
    </location>
    <ligand>
        <name>substrate</name>
    </ligand>
</feature>
<feature type="glycosylation site" description="N-linked (GlcNAc...) asparagine" evidence="4">
    <location>
        <position position="95"/>
    </location>
</feature>
<feature type="glycosylation site" description="N-linked (GlcNAc...) asparagine" evidence="4">
    <location>
        <position position="552"/>
    </location>
</feature>
<feature type="disulfide bond" evidence="5">
    <location>
        <begin position="106"/>
        <end position="339"/>
    </location>
</feature>
<feature type="disulfide bond" evidence="5">
    <location>
        <begin position="330"/>
        <end position="408"/>
    </location>
</feature>
<feature type="disulfide bond" evidence="5">
    <location>
        <begin position="442"/>
        <end position="459"/>
    </location>
</feature>
<feature type="disulfide bond" evidence="5">
    <location>
        <begin position="482"/>
        <end position="497"/>
    </location>
</feature>
<feature type="disulfide bond" evidence="5">
    <location>
        <begin position="523"/>
        <end position="540"/>
    </location>
</feature>
<feature type="mutagenesis site" description="Loss of enzyme activity." evidence="6">
    <original>C</original>
    <variation>A</variation>
    <location>
        <position position="106"/>
    </location>
</feature>
<feature type="mutagenesis site" description="Loss of enzyme activity due to absence of interaction between UDP moiety and UDP-GalNAC." evidence="6">
    <original>C</original>
    <variation>A</variation>
    <location>
        <position position="212"/>
    </location>
</feature>
<feature type="mutagenesis site" description="Loss of enzyme activity due to absence of interaction between UDP moiety and UDP-GalNAC." evidence="6">
    <original>C</original>
    <variation>A</variation>
    <location>
        <position position="214"/>
    </location>
</feature>
<feature type="mutagenesis site" description="No effect." evidence="6">
    <original>C</original>
    <variation>A</variation>
    <location>
        <position position="235"/>
    </location>
</feature>
<feature type="mutagenesis site" description="Loss of enzyme activity." evidence="6">
    <original>C</original>
    <variation>A</variation>
    <location>
        <position position="330"/>
    </location>
</feature>
<feature type="mutagenesis site" description="Loss of enzyme activity." evidence="6">
    <original>C</original>
    <variation>A</variation>
    <location>
        <position position="339"/>
    </location>
</feature>
<feature type="mutagenesis site" description="Loss of enzyme activity." evidence="6">
    <original>C</original>
    <variation>A</variation>
    <location>
        <position position="408"/>
    </location>
</feature>
<feature type="mutagenesis site" description="Loss of enzyme activity." evidence="7">
    <original>C</original>
    <variation>A</variation>
    <location>
        <position position="442"/>
    </location>
</feature>
<feature type="mutagenesis site" description="Induces a strong decrease in activity; loss of function; when associated with A-484 and A-525." evidence="7 8">
    <original>D</original>
    <variation>A</variation>
    <location>
        <position position="444"/>
    </location>
</feature>
<feature type="mutagenesis site" description="Induces a decrease in activity." evidence="7">
    <original>G</original>
    <variation>Q</variation>
    <location>
        <position position="455"/>
    </location>
</feature>
<feature type="mutagenesis site" description="Little or no effect." evidence="7">
    <original>F</original>
    <variation>A</variation>
    <location>
        <position position="457"/>
    </location>
</feature>
<feature type="mutagenesis site" description="Loss of enzyme activity." evidence="7">
    <original>C</original>
    <variation>A</variation>
    <location>
        <position position="459"/>
    </location>
</feature>
<feature type="mutagenesis site" description="Little or no effect." evidence="7">
    <original>N</original>
    <variation>A</variation>
    <location>
        <position position="465"/>
    </location>
</feature>
<feature type="mutagenesis site" description="Induces a decrease in activity." evidence="7">
    <original>Q</original>
    <variation>A</variation>
    <location>
        <position position="466"/>
    </location>
</feature>
<feature type="mutagenesis site" description="Loss of enzyme activity." evidence="7">
    <original>F</original>
    <variation>A</variation>
    <location>
        <position position="468"/>
    </location>
</feature>
<feature type="mutagenesis site" description="Little or no effect." evidence="7">
    <original>F</original>
    <variation>W</variation>
    <variation>Y</variation>
    <location>
        <position position="468"/>
    </location>
</feature>
<feature type="mutagenesis site" description="Loss of enzyme activity." evidence="7">
    <original>C</original>
    <variation>A</variation>
    <location>
        <position position="482"/>
    </location>
</feature>
<feature type="mutagenesis site" description="Loss of enzyme activity; when associated with A-444 and A-525." evidence="7 8">
    <original>D</original>
    <variation>A</variation>
    <location>
        <position position="484"/>
    </location>
</feature>
<feature type="mutagenesis site" description="Loss of enzyme activity." evidence="7">
    <original>C</original>
    <variation>A</variation>
    <location>
        <position position="497"/>
    </location>
</feature>
<feature type="mutagenesis site" description="Loss of enzyme activity." evidence="7">
    <original>C</original>
    <variation>A</variation>
    <location>
        <position position="523"/>
    </location>
</feature>
<feature type="mutagenesis site" description="Loss of enzyme activity; when associated with A-444 and A-484." evidence="7 8">
    <original>D</original>
    <variation>A</variation>
    <location>
        <position position="525"/>
    </location>
</feature>
<feature type="mutagenesis site" description="Loss of enzyme activity." evidence="7">
    <original>C</original>
    <variation>A</variation>
    <location>
        <position position="540"/>
    </location>
</feature>
<accession>Q10473</accession>
<protein>
    <recommendedName>
        <fullName evidence="9">Polypeptide N-acetylgalactosaminyltransferase 1</fullName>
        <ecNumber evidence="6 7 8">2.4.1.41</ecNumber>
    </recommendedName>
    <alternativeName>
        <fullName>Polypeptide GalNAc transferase 1</fullName>
        <shortName>GalNAc-T1</shortName>
        <shortName>pp-GaNTase 1</shortName>
    </alternativeName>
    <alternativeName>
        <fullName>Protein-UDP acetylgalactosaminyltransferase 1</fullName>
    </alternativeName>
    <alternativeName>
        <fullName>UDP-GalNAc:polypeptide N-acetylgalactosaminyltransferase 1</fullName>
    </alternativeName>
    <component>
        <recommendedName>
            <fullName>Polypeptide N-acetylgalactosaminyltransferase 1 soluble form</fullName>
        </recommendedName>
    </component>
</protein>
<evidence type="ECO:0000250" key="1"/>
<evidence type="ECO:0000250" key="2">
    <source>
        <dbReference type="UniProtKB" id="O08912"/>
    </source>
</evidence>
<evidence type="ECO:0000250" key="3">
    <source>
        <dbReference type="UniProtKB" id="Q10472"/>
    </source>
</evidence>
<evidence type="ECO:0000255" key="4"/>
<evidence type="ECO:0000255" key="5">
    <source>
        <dbReference type="PROSITE-ProRule" id="PRU00174"/>
    </source>
</evidence>
<evidence type="ECO:0000269" key="6">
    <source>
    </source>
</evidence>
<evidence type="ECO:0000269" key="7">
    <source>
    </source>
</evidence>
<evidence type="ECO:0000269" key="8">
    <source>
    </source>
</evidence>
<evidence type="ECO:0000305" key="9"/>
<evidence type="ECO:0000305" key="10">
    <source>
    </source>
</evidence>
<evidence type="ECO:0000305" key="11">
    <source>
    </source>
</evidence>
<evidence type="ECO:0000312" key="12">
    <source>
        <dbReference type="RGD" id="620358"/>
    </source>
</evidence>
<keyword id="KW-1015">Disulfide bond</keyword>
<keyword id="KW-0325">Glycoprotein</keyword>
<keyword id="KW-0328">Glycosyltransferase</keyword>
<keyword id="KW-0333">Golgi apparatus</keyword>
<keyword id="KW-0430">Lectin</keyword>
<keyword id="KW-0464">Manganese</keyword>
<keyword id="KW-0472">Membrane</keyword>
<keyword id="KW-0479">Metal-binding</keyword>
<keyword id="KW-1185">Reference proteome</keyword>
<keyword id="KW-0964">Secreted</keyword>
<keyword id="KW-0735">Signal-anchor</keyword>
<keyword id="KW-0808">Transferase</keyword>
<keyword id="KW-0812">Transmembrane</keyword>
<keyword id="KW-1133">Transmembrane helix</keyword>
<proteinExistence type="evidence at protein level"/>
<comment type="function">
    <text evidence="3 6 7 8">Catalyzes the initial reaction in O-linked oligosaccharide biosynthesis, the transfer of an N-acetyl-D-galactosamine residue to a serine or threonine residue on the protein receptor (PubMed:12199709, PubMed:12364335, PubMed:12419318). Has a broad spectrum of substrates such as apomucin-, MUC5AC-, MUC1- and MUC2-derived peptides (By similarity).</text>
</comment>
<comment type="catalytic activity">
    <reaction>
        <text>L-seryl-[protein] + UDP-N-acetyl-alpha-D-galactosamine = a 3-O-[N-acetyl-alpha-D-galactosaminyl]-L-seryl-[protein] + UDP + H(+)</text>
        <dbReference type="Rhea" id="RHEA:23956"/>
        <dbReference type="Rhea" id="RHEA-COMP:9863"/>
        <dbReference type="Rhea" id="RHEA-COMP:12788"/>
        <dbReference type="ChEBI" id="CHEBI:15378"/>
        <dbReference type="ChEBI" id="CHEBI:29999"/>
        <dbReference type="ChEBI" id="CHEBI:53604"/>
        <dbReference type="ChEBI" id="CHEBI:58223"/>
        <dbReference type="ChEBI" id="CHEBI:67138"/>
        <dbReference type="EC" id="2.4.1.41"/>
    </reaction>
</comment>
<comment type="catalytic activity">
    <reaction evidence="6 7 8">
        <text>L-threonyl-[protein] + UDP-N-acetyl-alpha-D-galactosamine = a 3-O-[N-acetyl-alpha-D-galactosaminyl]-L-threonyl-[protein] + UDP + H(+)</text>
        <dbReference type="Rhea" id="RHEA:52424"/>
        <dbReference type="Rhea" id="RHEA-COMP:11060"/>
        <dbReference type="Rhea" id="RHEA-COMP:11689"/>
        <dbReference type="ChEBI" id="CHEBI:15378"/>
        <dbReference type="ChEBI" id="CHEBI:30013"/>
        <dbReference type="ChEBI" id="CHEBI:58223"/>
        <dbReference type="ChEBI" id="CHEBI:67138"/>
        <dbReference type="ChEBI" id="CHEBI:87075"/>
        <dbReference type="EC" id="2.4.1.41"/>
    </reaction>
    <physiologicalReaction direction="left-to-right" evidence="10 11">
        <dbReference type="Rhea" id="RHEA:52425"/>
    </physiologicalReaction>
</comment>
<comment type="cofactor">
    <cofactor evidence="2">
        <name>Mn(2+)</name>
        <dbReference type="ChEBI" id="CHEBI:29035"/>
    </cofactor>
</comment>
<comment type="biophysicochemical properties">
    <kinetics>
        <KM evidence="6 7 8">5.1 uM for UDP-N-acetyl-alpha-D-galactosamine</KM>
    </kinetics>
</comment>
<comment type="pathway">
    <text evidence="6 7 8">Protein modification; protein glycosylation.</text>
</comment>
<comment type="subcellular location">
    <molecule>Polypeptide N-acetylgalactosaminyltransferase 1</molecule>
    <subcellularLocation>
        <location evidence="1">Golgi apparatus</location>
        <location evidence="1">Golgi stack membrane</location>
        <topology evidence="1">Single-pass type II membrane protein</topology>
    </subcellularLocation>
</comment>
<comment type="subcellular location">
    <molecule>Polypeptide N-acetylgalactosaminyltransferase 1 soluble form</molecule>
    <subcellularLocation>
        <location evidence="1">Secreted</location>
    </subcellularLocation>
</comment>
<comment type="tissue specificity">
    <text>Heart, brain, spleen, liver, skeletal muscle and kidney.</text>
</comment>
<comment type="domain">
    <text>There are two conserved domains in the glycosyltransferase region: the N-terminal domain (domain A, also called GT1 motif), which is probably involved in manganese coordination and substrate binding and the C-terminal domain (domain B, also called Gal/GalNAc-T motif), which is probably involved in catalytic reaction and UDP-Gal binding.</text>
</comment>
<comment type="domain">
    <text>The ricin B-type lectin domain directs the glycopeptide specificity. It is required in the glycopeptide specificity of enzyme activity but not for activity with naked peptide substrates, suggesting that it triggers the catalytic domain to act on GalNAc-glycopeptide substrates.</text>
</comment>
<comment type="similarity">
    <text evidence="9">Belongs to the glycosyltransferase 2 family. GalNAc-T subfamily.</text>
</comment>
<organism>
    <name type="scientific">Rattus norvegicus</name>
    <name type="common">Rat</name>
    <dbReference type="NCBI Taxonomy" id="10116"/>
    <lineage>
        <taxon>Eukaryota</taxon>
        <taxon>Metazoa</taxon>
        <taxon>Chordata</taxon>
        <taxon>Craniata</taxon>
        <taxon>Vertebrata</taxon>
        <taxon>Euteleostomi</taxon>
        <taxon>Mammalia</taxon>
        <taxon>Eutheria</taxon>
        <taxon>Euarchontoglires</taxon>
        <taxon>Glires</taxon>
        <taxon>Rodentia</taxon>
        <taxon>Myomorpha</taxon>
        <taxon>Muroidea</taxon>
        <taxon>Muridae</taxon>
        <taxon>Murinae</taxon>
        <taxon>Rattus</taxon>
    </lineage>
</organism>
<dbReference type="EC" id="2.4.1.41" evidence="6 7 8"/>
<dbReference type="EMBL" id="U35890">
    <property type="protein sequence ID" value="AAC52511.1"/>
    <property type="molecule type" value="mRNA"/>
</dbReference>
<dbReference type="RefSeq" id="NP_077349.1">
    <property type="nucleotide sequence ID" value="NM_024373.2"/>
</dbReference>
<dbReference type="RefSeq" id="XP_006254533.1">
    <property type="nucleotide sequence ID" value="XM_006254471.3"/>
</dbReference>
<dbReference type="RefSeq" id="XP_038953064.1">
    <property type="nucleotide sequence ID" value="XM_039097136.2"/>
</dbReference>
<dbReference type="RefSeq" id="XP_038953065.1">
    <property type="nucleotide sequence ID" value="XM_039097137.2"/>
</dbReference>
<dbReference type="RefSeq" id="XP_063133670.1">
    <property type="nucleotide sequence ID" value="XM_063277600.1"/>
</dbReference>
<dbReference type="RefSeq" id="XP_063133671.1">
    <property type="nucleotide sequence ID" value="XM_063277601.1"/>
</dbReference>
<dbReference type="SMR" id="Q10473"/>
<dbReference type="FunCoup" id="Q10473">
    <property type="interactions" value="2323"/>
</dbReference>
<dbReference type="STRING" id="10116.ENSRNOP00000022117"/>
<dbReference type="CAZy" id="CBM13">
    <property type="family name" value="Carbohydrate-Binding Module Family 13"/>
</dbReference>
<dbReference type="CAZy" id="GT27">
    <property type="family name" value="Glycosyltransferase Family 27"/>
</dbReference>
<dbReference type="GlyCosmos" id="Q10473">
    <property type="glycosylation" value="2 sites, No reported glycans"/>
</dbReference>
<dbReference type="GlyGen" id="Q10473">
    <property type="glycosylation" value="2 sites"/>
</dbReference>
<dbReference type="PhosphoSitePlus" id="Q10473"/>
<dbReference type="SwissPalm" id="Q10473"/>
<dbReference type="PaxDb" id="10116-ENSRNOP00000022117"/>
<dbReference type="Ensembl" id="ENSRNOT00000022117.5">
    <property type="protein sequence ID" value="ENSRNOP00000022117.2"/>
    <property type="gene ID" value="ENSRNOG00000016207.5"/>
</dbReference>
<dbReference type="GeneID" id="79214"/>
<dbReference type="KEGG" id="rno:79214"/>
<dbReference type="UCSC" id="RGD:620358">
    <property type="organism name" value="rat"/>
</dbReference>
<dbReference type="AGR" id="RGD:620358"/>
<dbReference type="CTD" id="2589"/>
<dbReference type="RGD" id="620358">
    <property type="gene designation" value="Galnt1"/>
</dbReference>
<dbReference type="eggNOG" id="KOG3736">
    <property type="taxonomic scope" value="Eukaryota"/>
</dbReference>
<dbReference type="GeneTree" id="ENSGT00940000154732"/>
<dbReference type="HOGENOM" id="CLU_013477_0_1_1"/>
<dbReference type="InParanoid" id="Q10473"/>
<dbReference type="OMA" id="MGQGFAP"/>
<dbReference type="OrthoDB" id="330637at2759"/>
<dbReference type="PhylomeDB" id="Q10473"/>
<dbReference type="TreeFam" id="TF313267"/>
<dbReference type="BRENDA" id="2.4.1.41">
    <property type="organism ID" value="5301"/>
</dbReference>
<dbReference type="Reactome" id="R-RNO-6811436">
    <property type="pathway name" value="COPI-independent Golgi-to-ER retrograde traffic"/>
</dbReference>
<dbReference type="Reactome" id="R-RNO-913709">
    <property type="pathway name" value="O-linked glycosylation of mucins"/>
</dbReference>
<dbReference type="UniPathway" id="UPA00378"/>
<dbReference type="PRO" id="PR:Q10473"/>
<dbReference type="Proteomes" id="UP000002494">
    <property type="component" value="Chromosome 18"/>
</dbReference>
<dbReference type="Bgee" id="ENSRNOG00000016207">
    <property type="expression patterns" value="Expressed in jejunum and 19 other cell types or tissues"/>
</dbReference>
<dbReference type="GO" id="GO:0005576">
    <property type="term" value="C:extracellular region"/>
    <property type="evidence" value="ECO:0007669"/>
    <property type="project" value="UniProtKB-SubCell"/>
</dbReference>
<dbReference type="GO" id="GO:0005794">
    <property type="term" value="C:Golgi apparatus"/>
    <property type="evidence" value="ECO:0000266"/>
    <property type="project" value="RGD"/>
</dbReference>
<dbReference type="GO" id="GO:0032580">
    <property type="term" value="C:Golgi cisterna membrane"/>
    <property type="evidence" value="ECO:0007669"/>
    <property type="project" value="UniProtKB-SubCell"/>
</dbReference>
<dbReference type="GO" id="GO:0048471">
    <property type="term" value="C:perinuclear region of cytoplasm"/>
    <property type="evidence" value="ECO:0000266"/>
    <property type="project" value="RGD"/>
</dbReference>
<dbReference type="GO" id="GO:0030246">
    <property type="term" value="F:carbohydrate binding"/>
    <property type="evidence" value="ECO:0007669"/>
    <property type="project" value="UniProtKB-KW"/>
</dbReference>
<dbReference type="GO" id="GO:0030145">
    <property type="term" value="F:manganese ion binding"/>
    <property type="evidence" value="ECO:0000250"/>
    <property type="project" value="UniProtKB"/>
</dbReference>
<dbReference type="GO" id="GO:0004653">
    <property type="term" value="F:polypeptide N-acetylgalactosaminyltransferase activity"/>
    <property type="evidence" value="ECO:0000314"/>
    <property type="project" value="UniProtKB"/>
</dbReference>
<dbReference type="GO" id="GO:0006493">
    <property type="term" value="P:protein O-linked glycosylation"/>
    <property type="evidence" value="ECO:0000250"/>
    <property type="project" value="UniProtKB"/>
</dbReference>
<dbReference type="GO" id="GO:0018242">
    <property type="term" value="P:protein O-linked glycosylation via serine"/>
    <property type="evidence" value="ECO:0000266"/>
    <property type="project" value="RGD"/>
</dbReference>
<dbReference type="GO" id="GO:0018243">
    <property type="term" value="P:protein O-linked glycosylation via threonine"/>
    <property type="evidence" value="ECO:0000266"/>
    <property type="project" value="RGD"/>
</dbReference>
<dbReference type="CDD" id="cd23466">
    <property type="entry name" value="beta-trefoil_Ricin_GALNT1"/>
    <property type="match status" value="1"/>
</dbReference>
<dbReference type="CDD" id="cd02510">
    <property type="entry name" value="pp-GalNAc-T"/>
    <property type="match status" value="1"/>
</dbReference>
<dbReference type="FunFam" id="2.80.10.50:FF:000014">
    <property type="entry name" value="Polypeptide N-acetylgalactosaminyltransferase"/>
    <property type="match status" value="1"/>
</dbReference>
<dbReference type="FunFam" id="3.90.550.10:FF:000005">
    <property type="entry name" value="Polypeptide N-acetylgalactosaminyltransferase"/>
    <property type="match status" value="1"/>
</dbReference>
<dbReference type="Gene3D" id="2.80.10.50">
    <property type="match status" value="1"/>
</dbReference>
<dbReference type="Gene3D" id="3.90.550.10">
    <property type="entry name" value="Spore Coat Polysaccharide Biosynthesis Protein SpsA, Chain A"/>
    <property type="match status" value="1"/>
</dbReference>
<dbReference type="InterPro" id="IPR045885">
    <property type="entry name" value="GalNAc-T"/>
</dbReference>
<dbReference type="InterPro" id="IPR001173">
    <property type="entry name" value="Glyco_trans_2-like"/>
</dbReference>
<dbReference type="InterPro" id="IPR029044">
    <property type="entry name" value="Nucleotide-diphossugar_trans"/>
</dbReference>
<dbReference type="InterPro" id="IPR035992">
    <property type="entry name" value="Ricin_B-like_lectins"/>
</dbReference>
<dbReference type="InterPro" id="IPR000772">
    <property type="entry name" value="Ricin_B_lectin"/>
</dbReference>
<dbReference type="PANTHER" id="PTHR11675">
    <property type="entry name" value="N-ACETYLGALACTOSAMINYLTRANSFERASE"/>
    <property type="match status" value="1"/>
</dbReference>
<dbReference type="PANTHER" id="PTHR11675:SF123">
    <property type="entry name" value="POLYPEPTIDE N-ACETYLGALACTOSAMINYLTRANSFERASE 1"/>
    <property type="match status" value="1"/>
</dbReference>
<dbReference type="Pfam" id="PF00535">
    <property type="entry name" value="Glycos_transf_2"/>
    <property type="match status" value="1"/>
</dbReference>
<dbReference type="Pfam" id="PF00652">
    <property type="entry name" value="Ricin_B_lectin"/>
    <property type="match status" value="1"/>
</dbReference>
<dbReference type="SMART" id="SM00458">
    <property type="entry name" value="RICIN"/>
    <property type="match status" value="1"/>
</dbReference>
<dbReference type="SUPFAM" id="SSF53448">
    <property type="entry name" value="Nucleotide-diphospho-sugar transferases"/>
    <property type="match status" value="1"/>
</dbReference>
<dbReference type="SUPFAM" id="SSF50370">
    <property type="entry name" value="Ricin B-like lectins"/>
    <property type="match status" value="1"/>
</dbReference>
<dbReference type="PROSITE" id="PS50231">
    <property type="entry name" value="RICIN_B_LECTIN"/>
    <property type="match status" value="1"/>
</dbReference>
<gene>
    <name evidence="12" type="primary">Galnt1</name>
</gene>
<name>GALT1_RAT</name>